<accession>B2JDZ5</accession>
<organism>
    <name type="scientific">Paraburkholderia phymatum (strain DSM 17167 / CIP 108236 / LMG 21445 / STM815)</name>
    <name type="common">Burkholderia phymatum</name>
    <dbReference type="NCBI Taxonomy" id="391038"/>
    <lineage>
        <taxon>Bacteria</taxon>
        <taxon>Pseudomonadati</taxon>
        <taxon>Pseudomonadota</taxon>
        <taxon>Betaproteobacteria</taxon>
        <taxon>Burkholderiales</taxon>
        <taxon>Burkholderiaceae</taxon>
        <taxon>Paraburkholderia</taxon>
    </lineage>
</organism>
<proteinExistence type="inferred from homology"/>
<sequence>MNQAIRSVEYDRPQGTACSIGQAWAKVPDSPSTHERLALKERIRGLLKREKAVLVAHYYVDAELQELADETGGCVADSLEMARFGRDHDAQTLVVAGVRFMGETAKILSPNKRILMPDLDATCSLDLGCPVDEFSAFCDAHPDRIVVVYANTSAAVKARADWMVTSSIGLEIVADLHARGEKIIWAPDRHLGGYIQKKTGADMLLWQGSCLVHDEFKGVELDLLRAEYPDAKVLVHPESPESVVAQADVVGSTTQLIDAAKNSSATHFIVATDLGILHKMRIAAPGKTFIEAPTAGNSATCKSCAHCPWMAMNGLRNLAEVLERGHNEIFVDAAIGERARLPIDRMLDFAARHKKRVQASGDLAHDTALFSNVGAA</sequence>
<name>NADA_PARP8</name>
<evidence type="ECO:0000255" key="1">
    <source>
        <dbReference type="HAMAP-Rule" id="MF_00567"/>
    </source>
</evidence>
<reference key="1">
    <citation type="journal article" date="2014" name="Stand. Genomic Sci.">
        <title>Complete genome sequence of Burkholderia phymatum STM815(T), a broad host range and efficient nitrogen-fixing symbiont of Mimosa species.</title>
        <authorList>
            <person name="Moulin L."/>
            <person name="Klonowska A."/>
            <person name="Caroline B."/>
            <person name="Booth K."/>
            <person name="Vriezen J.A."/>
            <person name="Melkonian R."/>
            <person name="James E.K."/>
            <person name="Young J.P."/>
            <person name="Bena G."/>
            <person name="Hauser L."/>
            <person name="Land M."/>
            <person name="Kyrpides N."/>
            <person name="Bruce D."/>
            <person name="Chain P."/>
            <person name="Copeland A."/>
            <person name="Pitluck S."/>
            <person name="Woyke T."/>
            <person name="Lizotte-Waniewski M."/>
            <person name="Bristow J."/>
            <person name="Riley M."/>
        </authorList>
    </citation>
    <scope>NUCLEOTIDE SEQUENCE [LARGE SCALE GENOMIC DNA]</scope>
    <source>
        <strain>DSM 17167 / CIP 108236 / LMG 21445 / STM815</strain>
    </source>
</reference>
<keyword id="KW-0004">4Fe-4S</keyword>
<keyword id="KW-0963">Cytoplasm</keyword>
<keyword id="KW-0408">Iron</keyword>
<keyword id="KW-0411">Iron-sulfur</keyword>
<keyword id="KW-0479">Metal-binding</keyword>
<keyword id="KW-0662">Pyridine nucleotide biosynthesis</keyword>
<keyword id="KW-1185">Reference proteome</keyword>
<keyword id="KW-0808">Transferase</keyword>
<gene>
    <name evidence="1" type="primary">nadA</name>
    <name type="ordered locus">Bphy_0580</name>
</gene>
<protein>
    <recommendedName>
        <fullName evidence="1">Quinolinate synthase</fullName>
        <ecNumber evidence="1">2.5.1.72</ecNumber>
    </recommendedName>
</protein>
<feature type="chain" id="PRO_1000129409" description="Quinolinate synthase">
    <location>
        <begin position="1"/>
        <end position="376"/>
    </location>
</feature>
<feature type="binding site" evidence="1">
    <location>
        <position position="57"/>
    </location>
    <ligand>
        <name>iminosuccinate</name>
        <dbReference type="ChEBI" id="CHEBI:77875"/>
    </ligand>
</feature>
<feature type="binding site" evidence="1">
    <location>
        <position position="78"/>
    </location>
    <ligand>
        <name>iminosuccinate</name>
        <dbReference type="ChEBI" id="CHEBI:77875"/>
    </ligand>
</feature>
<feature type="binding site" evidence="1">
    <location>
        <position position="123"/>
    </location>
    <ligand>
        <name>[4Fe-4S] cluster</name>
        <dbReference type="ChEBI" id="CHEBI:49883"/>
    </ligand>
</feature>
<feature type="binding site" evidence="1">
    <location>
        <begin position="149"/>
        <end position="151"/>
    </location>
    <ligand>
        <name>iminosuccinate</name>
        <dbReference type="ChEBI" id="CHEBI:77875"/>
    </ligand>
</feature>
<feature type="binding site" evidence="1">
    <location>
        <position position="166"/>
    </location>
    <ligand>
        <name>iminosuccinate</name>
        <dbReference type="ChEBI" id="CHEBI:77875"/>
    </ligand>
</feature>
<feature type="binding site" evidence="1">
    <location>
        <position position="210"/>
    </location>
    <ligand>
        <name>[4Fe-4S] cluster</name>
        <dbReference type="ChEBI" id="CHEBI:49883"/>
    </ligand>
</feature>
<feature type="binding site" evidence="1">
    <location>
        <begin position="236"/>
        <end position="238"/>
    </location>
    <ligand>
        <name>iminosuccinate</name>
        <dbReference type="ChEBI" id="CHEBI:77875"/>
    </ligand>
</feature>
<feature type="binding site" evidence="1">
    <location>
        <position position="253"/>
    </location>
    <ligand>
        <name>iminosuccinate</name>
        <dbReference type="ChEBI" id="CHEBI:77875"/>
    </ligand>
</feature>
<feature type="binding site" evidence="1">
    <location>
        <position position="307"/>
    </location>
    <ligand>
        <name>[4Fe-4S] cluster</name>
        <dbReference type="ChEBI" id="CHEBI:49883"/>
    </ligand>
</feature>
<dbReference type="EC" id="2.5.1.72" evidence="1"/>
<dbReference type="EMBL" id="CP001043">
    <property type="protein sequence ID" value="ACC69771.1"/>
    <property type="molecule type" value="Genomic_DNA"/>
</dbReference>
<dbReference type="RefSeq" id="WP_012399994.1">
    <property type="nucleotide sequence ID" value="NC_010622.1"/>
</dbReference>
<dbReference type="SMR" id="B2JDZ5"/>
<dbReference type="STRING" id="391038.Bphy_0580"/>
<dbReference type="KEGG" id="bph:Bphy_0580"/>
<dbReference type="eggNOG" id="COG0379">
    <property type="taxonomic scope" value="Bacteria"/>
</dbReference>
<dbReference type="HOGENOM" id="CLU_047382_1_0_4"/>
<dbReference type="OrthoDB" id="9801204at2"/>
<dbReference type="UniPathway" id="UPA00253">
    <property type="reaction ID" value="UER00327"/>
</dbReference>
<dbReference type="Proteomes" id="UP000001192">
    <property type="component" value="Chromosome 1"/>
</dbReference>
<dbReference type="GO" id="GO:0005829">
    <property type="term" value="C:cytosol"/>
    <property type="evidence" value="ECO:0007669"/>
    <property type="project" value="TreeGrafter"/>
</dbReference>
<dbReference type="GO" id="GO:0051539">
    <property type="term" value="F:4 iron, 4 sulfur cluster binding"/>
    <property type="evidence" value="ECO:0007669"/>
    <property type="project" value="UniProtKB-KW"/>
</dbReference>
<dbReference type="GO" id="GO:0046872">
    <property type="term" value="F:metal ion binding"/>
    <property type="evidence" value="ECO:0007669"/>
    <property type="project" value="UniProtKB-KW"/>
</dbReference>
<dbReference type="GO" id="GO:0008987">
    <property type="term" value="F:quinolinate synthetase A activity"/>
    <property type="evidence" value="ECO:0007669"/>
    <property type="project" value="UniProtKB-UniRule"/>
</dbReference>
<dbReference type="GO" id="GO:0034628">
    <property type="term" value="P:'de novo' NAD biosynthetic process from L-aspartate"/>
    <property type="evidence" value="ECO:0007669"/>
    <property type="project" value="TreeGrafter"/>
</dbReference>
<dbReference type="FunFam" id="3.40.50.10800:FF:000001">
    <property type="entry name" value="Quinolinate synthase A"/>
    <property type="match status" value="1"/>
</dbReference>
<dbReference type="FunFam" id="3.40.50.10800:FF:000003">
    <property type="entry name" value="Quinolinate synthase A"/>
    <property type="match status" value="1"/>
</dbReference>
<dbReference type="Gene3D" id="3.40.50.10800">
    <property type="entry name" value="NadA-like"/>
    <property type="match status" value="3"/>
</dbReference>
<dbReference type="HAMAP" id="MF_00567">
    <property type="entry name" value="NadA_type1"/>
    <property type="match status" value="1"/>
</dbReference>
<dbReference type="InterPro" id="IPR003473">
    <property type="entry name" value="NadA"/>
</dbReference>
<dbReference type="InterPro" id="IPR036094">
    <property type="entry name" value="NadA_sf"/>
</dbReference>
<dbReference type="InterPro" id="IPR023513">
    <property type="entry name" value="Quinolinate_synth_A_type1"/>
</dbReference>
<dbReference type="NCBIfam" id="TIGR00550">
    <property type="entry name" value="nadA"/>
    <property type="match status" value="1"/>
</dbReference>
<dbReference type="NCBIfam" id="NF006877">
    <property type="entry name" value="PRK09375.1-1"/>
    <property type="match status" value="1"/>
</dbReference>
<dbReference type="NCBIfam" id="NF006878">
    <property type="entry name" value="PRK09375.1-2"/>
    <property type="match status" value="1"/>
</dbReference>
<dbReference type="PANTHER" id="PTHR30573:SF0">
    <property type="entry name" value="QUINOLINATE SYNTHASE, CHLOROPLASTIC"/>
    <property type="match status" value="1"/>
</dbReference>
<dbReference type="PANTHER" id="PTHR30573">
    <property type="entry name" value="QUINOLINATE SYNTHETASE A"/>
    <property type="match status" value="1"/>
</dbReference>
<dbReference type="Pfam" id="PF02445">
    <property type="entry name" value="NadA"/>
    <property type="match status" value="1"/>
</dbReference>
<dbReference type="SUPFAM" id="SSF142754">
    <property type="entry name" value="NadA-like"/>
    <property type="match status" value="1"/>
</dbReference>
<comment type="function">
    <text evidence="1">Catalyzes the condensation of iminoaspartate with dihydroxyacetone phosphate to form quinolinate.</text>
</comment>
<comment type="catalytic activity">
    <reaction evidence="1">
        <text>iminosuccinate + dihydroxyacetone phosphate = quinolinate + phosphate + 2 H2O + H(+)</text>
        <dbReference type="Rhea" id="RHEA:25888"/>
        <dbReference type="ChEBI" id="CHEBI:15377"/>
        <dbReference type="ChEBI" id="CHEBI:15378"/>
        <dbReference type="ChEBI" id="CHEBI:29959"/>
        <dbReference type="ChEBI" id="CHEBI:43474"/>
        <dbReference type="ChEBI" id="CHEBI:57642"/>
        <dbReference type="ChEBI" id="CHEBI:77875"/>
        <dbReference type="EC" id="2.5.1.72"/>
    </reaction>
    <physiologicalReaction direction="left-to-right" evidence="1">
        <dbReference type="Rhea" id="RHEA:25889"/>
    </physiologicalReaction>
</comment>
<comment type="cofactor">
    <cofactor evidence="1">
        <name>[4Fe-4S] cluster</name>
        <dbReference type="ChEBI" id="CHEBI:49883"/>
    </cofactor>
    <text evidence="1">Binds 1 [4Fe-4S] cluster per subunit.</text>
</comment>
<comment type="pathway">
    <text evidence="1">Cofactor biosynthesis; NAD(+) biosynthesis; quinolinate from iminoaspartate: step 1/1.</text>
</comment>
<comment type="subcellular location">
    <subcellularLocation>
        <location evidence="1">Cytoplasm</location>
    </subcellularLocation>
</comment>
<comment type="similarity">
    <text evidence="1">Belongs to the quinolinate synthase family. Type 1 subfamily.</text>
</comment>